<dbReference type="EMBL" id="CP001078">
    <property type="protein sequence ID" value="ACD53687.1"/>
    <property type="molecule type" value="Genomic_DNA"/>
</dbReference>
<dbReference type="RefSeq" id="WP_003374169.1">
    <property type="nucleotide sequence ID" value="NC_010723.1"/>
</dbReference>
<dbReference type="SMR" id="B2V0A5"/>
<dbReference type="KEGG" id="cbt:CLH_0562"/>
<dbReference type="HOGENOM" id="CLU_061463_3_2_9"/>
<dbReference type="GO" id="GO:0005737">
    <property type="term" value="C:cytoplasm"/>
    <property type="evidence" value="ECO:0007669"/>
    <property type="project" value="UniProtKB-ARBA"/>
</dbReference>
<dbReference type="GO" id="GO:1990904">
    <property type="term" value="C:ribonucleoprotein complex"/>
    <property type="evidence" value="ECO:0007669"/>
    <property type="project" value="UniProtKB-KW"/>
</dbReference>
<dbReference type="GO" id="GO:0005840">
    <property type="term" value="C:ribosome"/>
    <property type="evidence" value="ECO:0007669"/>
    <property type="project" value="UniProtKB-KW"/>
</dbReference>
<dbReference type="GO" id="GO:0019843">
    <property type="term" value="F:rRNA binding"/>
    <property type="evidence" value="ECO:0007669"/>
    <property type="project" value="UniProtKB-UniRule"/>
</dbReference>
<dbReference type="GO" id="GO:0003735">
    <property type="term" value="F:structural constituent of ribosome"/>
    <property type="evidence" value="ECO:0007669"/>
    <property type="project" value="InterPro"/>
</dbReference>
<dbReference type="GO" id="GO:0006412">
    <property type="term" value="P:translation"/>
    <property type="evidence" value="ECO:0007669"/>
    <property type="project" value="UniProtKB-UniRule"/>
</dbReference>
<dbReference type="HAMAP" id="MF_01363">
    <property type="entry name" value="Ribosomal_bL21"/>
    <property type="match status" value="1"/>
</dbReference>
<dbReference type="InterPro" id="IPR028909">
    <property type="entry name" value="bL21-like"/>
</dbReference>
<dbReference type="InterPro" id="IPR036164">
    <property type="entry name" value="bL21-like_sf"/>
</dbReference>
<dbReference type="InterPro" id="IPR001787">
    <property type="entry name" value="Ribosomal_bL21"/>
</dbReference>
<dbReference type="InterPro" id="IPR018258">
    <property type="entry name" value="Ribosomal_bL21_CS"/>
</dbReference>
<dbReference type="NCBIfam" id="TIGR00061">
    <property type="entry name" value="L21"/>
    <property type="match status" value="1"/>
</dbReference>
<dbReference type="PANTHER" id="PTHR21349">
    <property type="entry name" value="50S RIBOSOMAL PROTEIN L21"/>
    <property type="match status" value="1"/>
</dbReference>
<dbReference type="PANTHER" id="PTHR21349:SF0">
    <property type="entry name" value="LARGE RIBOSOMAL SUBUNIT PROTEIN BL21M"/>
    <property type="match status" value="1"/>
</dbReference>
<dbReference type="Pfam" id="PF00829">
    <property type="entry name" value="Ribosomal_L21p"/>
    <property type="match status" value="1"/>
</dbReference>
<dbReference type="SUPFAM" id="SSF141091">
    <property type="entry name" value="L21p-like"/>
    <property type="match status" value="1"/>
</dbReference>
<dbReference type="PROSITE" id="PS01169">
    <property type="entry name" value="RIBOSOMAL_L21"/>
    <property type="match status" value="1"/>
</dbReference>
<accession>B2V0A5</accession>
<reference key="1">
    <citation type="submission" date="2008-05" db="EMBL/GenBank/DDBJ databases">
        <title>Complete genome sequence of Clostridium botulinum E3 str. Alaska E43.</title>
        <authorList>
            <person name="Brinkac L.M."/>
            <person name="Brown J.L."/>
            <person name="Bruce D."/>
            <person name="Detter C."/>
            <person name="Munk C."/>
            <person name="Smith L.A."/>
            <person name="Smith T.J."/>
            <person name="Sutton G."/>
            <person name="Brettin T.S."/>
        </authorList>
    </citation>
    <scope>NUCLEOTIDE SEQUENCE [LARGE SCALE GENOMIC DNA]</scope>
    <source>
        <strain>Alaska E43 / Type E3</strain>
    </source>
</reference>
<name>RL21_CLOBA</name>
<feature type="chain" id="PRO_1000143773" description="Large ribosomal subunit protein bL21">
    <location>
        <begin position="1"/>
        <end position="103"/>
    </location>
</feature>
<comment type="function">
    <text evidence="1">This protein binds to 23S rRNA in the presence of protein L20.</text>
</comment>
<comment type="subunit">
    <text evidence="1">Part of the 50S ribosomal subunit. Contacts protein L20.</text>
</comment>
<comment type="similarity">
    <text evidence="1">Belongs to the bacterial ribosomal protein bL21 family.</text>
</comment>
<evidence type="ECO:0000255" key="1">
    <source>
        <dbReference type="HAMAP-Rule" id="MF_01363"/>
    </source>
</evidence>
<evidence type="ECO:0000305" key="2"/>
<sequence>MYAVLATGGKQYRVQEGDVIYVEKLDAEVDSTVELTEVLAVANGEGIKVGAPVVEGAKVTAKVLAQGKQKKVIVFKYKAKKDYRRKNGHRQPYTKLVIEKIEA</sequence>
<proteinExistence type="inferred from homology"/>
<keyword id="KW-0687">Ribonucleoprotein</keyword>
<keyword id="KW-0689">Ribosomal protein</keyword>
<keyword id="KW-0694">RNA-binding</keyword>
<keyword id="KW-0699">rRNA-binding</keyword>
<gene>
    <name evidence="1" type="primary">rplU</name>
    <name type="ordered locus">CLH_0562</name>
</gene>
<organism>
    <name type="scientific">Clostridium botulinum (strain Alaska E43 / Type E3)</name>
    <dbReference type="NCBI Taxonomy" id="508767"/>
    <lineage>
        <taxon>Bacteria</taxon>
        <taxon>Bacillati</taxon>
        <taxon>Bacillota</taxon>
        <taxon>Clostridia</taxon>
        <taxon>Eubacteriales</taxon>
        <taxon>Clostridiaceae</taxon>
        <taxon>Clostridium</taxon>
    </lineage>
</organism>
<protein>
    <recommendedName>
        <fullName evidence="1">Large ribosomal subunit protein bL21</fullName>
    </recommendedName>
    <alternativeName>
        <fullName evidence="2">50S ribosomal protein L21</fullName>
    </alternativeName>
</protein>